<name>TR112_NEUCR</name>
<gene>
    <name type="primary">rmt-1</name>
    <name type="synonym">trm112</name>
    <name type="ORF">18F11.160</name>
    <name type="ORF">NCU01201</name>
</gene>
<comment type="function">
    <text evidence="1">Acts as an activator of both rRNA/tRNA and protein methyltransferases. Together with methyltransferase mtq2, required for the methylation of eRF1 on 'Gln-182'. Together with methyltransferase trm11, required for the formation of 2-methylguanosine at position 10 (m2G10) in tRNA. Together with methyltransferase bud23, required for the formation of a 7-methylguanine in 18S rRNA. Involved in biogenesis of both 40S and 60S ribosomal subunits (By similarity).</text>
</comment>
<comment type="subunit">
    <text evidence="1">Heterodimer of mtq2-rmt-1/trm112, forming the eRF1 methyltransferase. Rmt-1/trm112 is necessary for the solubility and activity of the catalytic subunit mtq2. Interacts with trm11; required for full tRNA methyltransferase activity. Interacts with bud23; required for full rRNA methyltransferase activity (By similarity).</text>
</comment>
<comment type="subcellular location">
    <subcellularLocation>
        <location evidence="1">Cytoplasm</location>
    </subcellularLocation>
    <subcellularLocation>
        <location evidence="1">Nucleus</location>
    </subcellularLocation>
</comment>
<comment type="similarity">
    <text evidence="2">Belongs to the TRM112 family.</text>
</comment>
<feature type="chain" id="PRO_0000215803" description="Multifunctional methyltransferase subunit trm112">
    <location>
        <begin position="1"/>
        <end position="127"/>
    </location>
</feature>
<feature type="domain" description="TRM112">
    <location>
        <begin position="2"/>
        <end position="123"/>
    </location>
</feature>
<keyword id="KW-0963">Cytoplasm</keyword>
<keyword id="KW-0539">Nucleus</keyword>
<keyword id="KW-1185">Reference proteome</keyword>
<proteinExistence type="inferred from homology"/>
<protein>
    <recommendedName>
        <fullName>Multifunctional methyltransferase subunit trm112</fullName>
    </recommendedName>
    <alternativeName>
        <fullName>RNA methyltransferase 1</fullName>
    </alternativeName>
    <alternativeName>
        <fullName>eRF1 methyltransferase subunit trm112</fullName>
        <shortName>eRF1 MTase subunit trm112</shortName>
    </alternativeName>
    <alternativeName>
        <fullName>tRNA methyltransferase 112 homolog</fullName>
    </alternativeName>
</protein>
<reference key="1">
    <citation type="journal article" date="2003" name="Nucleic Acids Res.">
        <title>What's in the genome of a filamentous fungus? Analysis of the Neurospora genome sequence.</title>
        <authorList>
            <person name="Mannhaupt G."/>
            <person name="Montrone C."/>
            <person name="Haase D."/>
            <person name="Mewes H.-W."/>
            <person name="Aign V."/>
            <person name="Hoheisel J.D."/>
            <person name="Fartmann B."/>
            <person name="Nyakatura G."/>
            <person name="Kempken F."/>
            <person name="Maier J."/>
            <person name="Schulte U."/>
        </authorList>
    </citation>
    <scope>NUCLEOTIDE SEQUENCE [LARGE SCALE GENOMIC DNA]</scope>
    <source>
        <strain>ATCC 24698 / 74-OR23-1A / CBS 708.71 / DSM 1257 / FGSC 987</strain>
    </source>
</reference>
<reference key="2">
    <citation type="journal article" date="2003" name="Nature">
        <title>The genome sequence of the filamentous fungus Neurospora crassa.</title>
        <authorList>
            <person name="Galagan J.E."/>
            <person name="Calvo S.E."/>
            <person name="Borkovich K.A."/>
            <person name="Selker E.U."/>
            <person name="Read N.D."/>
            <person name="Jaffe D.B."/>
            <person name="FitzHugh W."/>
            <person name="Ma L.-J."/>
            <person name="Smirnov S."/>
            <person name="Purcell S."/>
            <person name="Rehman B."/>
            <person name="Elkins T."/>
            <person name="Engels R."/>
            <person name="Wang S."/>
            <person name="Nielsen C.B."/>
            <person name="Butler J."/>
            <person name="Endrizzi M."/>
            <person name="Qui D."/>
            <person name="Ianakiev P."/>
            <person name="Bell-Pedersen D."/>
            <person name="Nelson M.A."/>
            <person name="Werner-Washburne M."/>
            <person name="Selitrennikoff C.P."/>
            <person name="Kinsey J.A."/>
            <person name="Braun E.L."/>
            <person name="Zelter A."/>
            <person name="Schulte U."/>
            <person name="Kothe G.O."/>
            <person name="Jedd G."/>
            <person name="Mewes H.-W."/>
            <person name="Staben C."/>
            <person name="Marcotte E."/>
            <person name="Greenberg D."/>
            <person name="Roy A."/>
            <person name="Foley K."/>
            <person name="Naylor J."/>
            <person name="Stange-Thomann N."/>
            <person name="Barrett R."/>
            <person name="Gnerre S."/>
            <person name="Kamal M."/>
            <person name="Kamvysselis M."/>
            <person name="Mauceli E.W."/>
            <person name="Bielke C."/>
            <person name="Rudd S."/>
            <person name="Frishman D."/>
            <person name="Krystofova S."/>
            <person name="Rasmussen C."/>
            <person name="Metzenberg R.L."/>
            <person name="Perkins D.D."/>
            <person name="Kroken S."/>
            <person name="Cogoni C."/>
            <person name="Macino G."/>
            <person name="Catcheside D.E.A."/>
            <person name="Li W."/>
            <person name="Pratt R.J."/>
            <person name="Osmani S.A."/>
            <person name="DeSouza C.P.C."/>
            <person name="Glass N.L."/>
            <person name="Orbach M.J."/>
            <person name="Berglund J.A."/>
            <person name="Voelker R."/>
            <person name="Yarden O."/>
            <person name="Plamann M."/>
            <person name="Seiler S."/>
            <person name="Dunlap J.C."/>
            <person name="Radford A."/>
            <person name="Aramayo R."/>
            <person name="Natvig D.O."/>
            <person name="Alex L.A."/>
            <person name="Mannhaupt G."/>
            <person name="Ebbole D.J."/>
            <person name="Freitag M."/>
            <person name="Paulsen I."/>
            <person name="Sachs M.S."/>
            <person name="Lander E.S."/>
            <person name="Nusbaum C."/>
            <person name="Birren B.W."/>
        </authorList>
    </citation>
    <scope>NUCLEOTIDE SEQUENCE [LARGE SCALE GENOMIC DNA]</scope>
    <source>
        <strain>ATCC 24698 / 74-OR23-1A / CBS 708.71 / DSM 1257 / FGSC 987</strain>
    </source>
</reference>
<dbReference type="EMBL" id="AL670011">
    <property type="protein sequence ID" value="CAD21420.1"/>
    <property type="molecule type" value="Genomic_DNA"/>
</dbReference>
<dbReference type="EMBL" id="CM002240">
    <property type="protein sequence ID" value="EAA32331.1"/>
    <property type="molecule type" value="Genomic_DNA"/>
</dbReference>
<dbReference type="RefSeq" id="XP_961567.1">
    <property type="nucleotide sequence ID" value="XM_956474.2"/>
</dbReference>
<dbReference type="SMR" id="Q8X0S4"/>
<dbReference type="FunCoup" id="Q8X0S4">
    <property type="interactions" value="818"/>
</dbReference>
<dbReference type="STRING" id="367110.Q8X0S4"/>
<dbReference type="PaxDb" id="5141-EFNCRP00000004358"/>
<dbReference type="EnsemblFungi" id="EAA32331">
    <property type="protein sequence ID" value="EAA32331"/>
    <property type="gene ID" value="NCU01201"/>
</dbReference>
<dbReference type="GeneID" id="3877690"/>
<dbReference type="KEGG" id="ncr:NCU01201"/>
<dbReference type="VEuPathDB" id="FungiDB:NCU01201"/>
<dbReference type="HOGENOM" id="CLU_086140_0_0_1"/>
<dbReference type="InParanoid" id="Q8X0S4"/>
<dbReference type="OMA" id="NMLTSKC"/>
<dbReference type="OrthoDB" id="2187549at2759"/>
<dbReference type="Proteomes" id="UP000001805">
    <property type="component" value="Chromosome 2, Linkage Group V"/>
</dbReference>
<dbReference type="GO" id="GO:0005737">
    <property type="term" value="C:cytoplasm"/>
    <property type="evidence" value="ECO:0000318"/>
    <property type="project" value="GO_Central"/>
</dbReference>
<dbReference type="GO" id="GO:0035657">
    <property type="term" value="C:eRF1 methyltransferase complex"/>
    <property type="evidence" value="ECO:0007669"/>
    <property type="project" value="EnsemblFungi"/>
</dbReference>
<dbReference type="GO" id="GO:0005634">
    <property type="term" value="C:nucleus"/>
    <property type="evidence" value="ECO:0000318"/>
    <property type="project" value="GO_Central"/>
</dbReference>
<dbReference type="GO" id="GO:0043528">
    <property type="term" value="C:tRNA (m2G10) methyltransferase complex"/>
    <property type="evidence" value="ECO:0000318"/>
    <property type="project" value="GO_Central"/>
</dbReference>
<dbReference type="GO" id="GO:0046982">
    <property type="term" value="F:protein heterodimerization activity"/>
    <property type="evidence" value="ECO:0007669"/>
    <property type="project" value="InterPro"/>
</dbReference>
<dbReference type="GO" id="GO:0008276">
    <property type="term" value="F:protein methyltransferase activity"/>
    <property type="evidence" value="ECO:0007669"/>
    <property type="project" value="EnsemblFungi"/>
</dbReference>
<dbReference type="GO" id="GO:0016435">
    <property type="term" value="F:rRNA (guanine) methyltransferase activity"/>
    <property type="evidence" value="ECO:0007669"/>
    <property type="project" value="EnsemblFungi"/>
</dbReference>
<dbReference type="GO" id="GO:0160102">
    <property type="term" value="F:tRNA (guanine(10)-N2)-methyltransferase activity"/>
    <property type="evidence" value="ECO:0007669"/>
    <property type="project" value="EnsemblFungi"/>
</dbReference>
<dbReference type="GO" id="GO:0141106">
    <property type="term" value="F:tRNA methyltransferase activator activity"/>
    <property type="evidence" value="ECO:0000318"/>
    <property type="project" value="GO_Central"/>
</dbReference>
<dbReference type="GO" id="GO:0000470">
    <property type="term" value="P:maturation of LSU-rRNA"/>
    <property type="evidence" value="ECO:0000318"/>
    <property type="project" value="GO_Central"/>
</dbReference>
<dbReference type="GO" id="GO:0030490">
    <property type="term" value="P:maturation of SSU-rRNA"/>
    <property type="evidence" value="ECO:0000318"/>
    <property type="project" value="GO_Central"/>
</dbReference>
<dbReference type="GO" id="GO:2000234">
    <property type="term" value="P:positive regulation of rRNA processing"/>
    <property type="evidence" value="ECO:0000318"/>
    <property type="project" value="GO_Central"/>
</dbReference>
<dbReference type="GO" id="GO:0070476">
    <property type="term" value="P:rRNA (guanine-N7)-methylation"/>
    <property type="evidence" value="ECO:0007669"/>
    <property type="project" value="EnsemblFungi"/>
</dbReference>
<dbReference type="GO" id="GO:0030488">
    <property type="term" value="P:tRNA methylation"/>
    <property type="evidence" value="ECO:0007669"/>
    <property type="project" value="EnsemblFungi"/>
</dbReference>
<dbReference type="GO" id="GO:0002098">
    <property type="term" value="P:tRNA wobble uridine modification"/>
    <property type="evidence" value="ECO:0007669"/>
    <property type="project" value="EnsemblFungi"/>
</dbReference>
<dbReference type="FunFam" id="2.20.25.10:FF:000021">
    <property type="entry name" value="Multifunctional methyltransferase subunit trm112"/>
    <property type="match status" value="1"/>
</dbReference>
<dbReference type="Gene3D" id="2.20.25.10">
    <property type="match status" value="1"/>
</dbReference>
<dbReference type="InterPro" id="IPR039127">
    <property type="entry name" value="Trm112"/>
</dbReference>
<dbReference type="InterPro" id="IPR005651">
    <property type="entry name" value="Trm112-like"/>
</dbReference>
<dbReference type="PANTHER" id="PTHR12773:SF0">
    <property type="entry name" value="MULTIFUNCTIONAL METHYLTRANSFERASE SUBUNIT TRM112-LIKE PROTEIN"/>
    <property type="match status" value="1"/>
</dbReference>
<dbReference type="PANTHER" id="PTHR12773">
    <property type="entry name" value="UPF0315 PROTEIN-RELATED"/>
    <property type="match status" value="1"/>
</dbReference>
<dbReference type="Pfam" id="PF03966">
    <property type="entry name" value="Trm112p"/>
    <property type="match status" value="1"/>
</dbReference>
<sequence length="127" mass="14151">MKVMTLNFLTCAVKNCKSSNDSFPLHPKEAELAKDDIEINPQLLINVLPRIDWAALRTTSTELGFPTLPEQPPSPEDLQSDEALLKELHELLMETQMMEGKLVCGHCGHEYAVKNGVANFLLPSHLV</sequence>
<organism>
    <name type="scientific">Neurospora crassa (strain ATCC 24698 / 74-OR23-1A / CBS 708.71 / DSM 1257 / FGSC 987)</name>
    <dbReference type="NCBI Taxonomy" id="367110"/>
    <lineage>
        <taxon>Eukaryota</taxon>
        <taxon>Fungi</taxon>
        <taxon>Dikarya</taxon>
        <taxon>Ascomycota</taxon>
        <taxon>Pezizomycotina</taxon>
        <taxon>Sordariomycetes</taxon>
        <taxon>Sordariomycetidae</taxon>
        <taxon>Sordariales</taxon>
        <taxon>Sordariaceae</taxon>
        <taxon>Neurospora</taxon>
    </lineage>
</organism>
<evidence type="ECO:0000250" key="1">
    <source>
        <dbReference type="UniProtKB" id="P53738"/>
    </source>
</evidence>
<evidence type="ECO:0000305" key="2"/>
<accession>Q8X0S4</accession>